<keyword id="KW-0227">DNA damage</keyword>
<keyword id="KW-0233">DNA recombination</keyword>
<keyword id="KW-0234">DNA repair</keyword>
<keyword id="KW-0235">DNA replication</keyword>
<keyword id="KW-0238">DNA-binding</keyword>
<keyword id="KW-1185">Reference proteome</keyword>
<comment type="function">
    <text evidence="1">Plays an important role in DNA replication, recombination and repair. Binds to ssDNA and to an array of partner proteins to recruit them to their sites of action during DNA metabolism.</text>
</comment>
<comment type="subunit">
    <text evidence="1">Homotetramer.</text>
</comment>
<gene>
    <name type="primary">ssb</name>
    <name type="ordered locus">SO_4028</name>
</gene>
<protein>
    <recommendedName>
        <fullName evidence="1">Single-stranded DNA-binding protein</fullName>
        <shortName evidence="1">SSB</shortName>
    </recommendedName>
</protein>
<name>SSB_SHEON</name>
<proteinExistence type="inferred from homology"/>
<dbReference type="EMBL" id="AE014299">
    <property type="protein sequence ID" value="AAN57002.1"/>
    <property type="molecule type" value="Genomic_DNA"/>
</dbReference>
<dbReference type="RefSeq" id="NP_719558.1">
    <property type="nucleotide sequence ID" value="NC_004347.2"/>
</dbReference>
<dbReference type="RefSeq" id="WP_011073744.1">
    <property type="nucleotide sequence ID" value="NC_004347.2"/>
</dbReference>
<dbReference type="SMR" id="Q8EA81"/>
<dbReference type="STRING" id="211586.SO_4028"/>
<dbReference type="PaxDb" id="211586-SO_4028"/>
<dbReference type="KEGG" id="son:SO_4028"/>
<dbReference type="PATRIC" id="fig|211586.12.peg.3905"/>
<dbReference type="eggNOG" id="COG0629">
    <property type="taxonomic scope" value="Bacteria"/>
</dbReference>
<dbReference type="HOGENOM" id="CLU_078758_0_1_6"/>
<dbReference type="OrthoDB" id="9809878at2"/>
<dbReference type="BioCyc" id="SONE211586:G1GMP-3728-MONOMER"/>
<dbReference type="Proteomes" id="UP000008186">
    <property type="component" value="Chromosome"/>
</dbReference>
<dbReference type="GO" id="GO:0009295">
    <property type="term" value="C:nucleoid"/>
    <property type="evidence" value="ECO:0000318"/>
    <property type="project" value="GO_Central"/>
</dbReference>
<dbReference type="GO" id="GO:0008047">
    <property type="term" value="F:enzyme activator activity"/>
    <property type="evidence" value="ECO:0000318"/>
    <property type="project" value="GO_Central"/>
</dbReference>
<dbReference type="GO" id="GO:0003697">
    <property type="term" value="F:single-stranded DNA binding"/>
    <property type="evidence" value="ECO:0000318"/>
    <property type="project" value="GO_Central"/>
</dbReference>
<dbReference type="GO" id="GO:0006310">
    <property type="term" value="P:DNA recombination"/>
    <property type="evidence" value="ECO:0007669"/>
    <property type="project" value="UniProtKB-UniRule"/>
</dbReference>
<dbReference type="GO" id="GO:0006281">
    <property type="term" value="P:DNA repair"/>
    <property type="evidence" value="ECO:0007669"/>
    <property type="project" value="UniProtKB-UniRule"/>
</dbReference>
<dbReference type="GO" id="GO:0006260">
    <property type="term" value="P:DNA replication"/>
    <property type="evidence" value="ECO:0000318"/>
    <property type="project" value="GO_Central"/>
</dbReference>
<dbReference type="CDD" id="cd04496">
    <property type="entry name" value="SSB_OBF"/>
    <property type="match status" value="1"/>
</dbReference>
<dbReference type="Gene3D" id="2.40.50.140">
    <property type="entry name" value="Nucleic acid-binding proteins"/>
    <property type="match status" value="1"/>
</dbReference>
<dbReference type="HAMAP" id="MF_00984">
    <property type="entry name" value="SSB"/>
    <property type="match status" value="1"/>
</dbReference>
<dbReference type="InterPro" id="IPR012340">
    <property type="entry name" value="NA-bd_OB-fold"/>
</dbReference>
<dbReference type="InterPro" id="IPR000424">
    <property type="entry name" value="Primosome_PriB/ssb"/>
</dbReference>
<dbReference type="InterPro" id="IPR011344">
    <property type="entry name" value="ssDNA-bd"/>
</dbReference>
<dbReference type="NCBIfam" id="TIGR00621">
    <property type="entry name" value="ssb"/>
    <property type="match status" value="1"/>
</dbReference>
<dbReference type="PANTHER" id="PTHR10302">
    <property type="entry name" value="SINGLE-STRANDED DNA-BINDING PROTEIN"/>
    <property type="match status" value="1"/>
</dbReference>
<dbReference type="PANTHER" id="PTHR10302:SF27">
    <property type="entry name" value="SINGLE-STRANDED DNA-BINDING PROTEIN"/>
    <property type="match status" value="1"/>
</dbReference>
<dbReference type="Pfam" id="PF00436">
    <property type="entry name" value="SSB"/>
    <property type="match status" value="1"/>
</dbReference>
<dbReference type="SUPFAM" id="SSF50249">
    <property type="entry name" value="Nucleic acid-binding proteins"/>
    <property type="match status" value="1"/>
</dbReference>
<dbReference type="PROSITE" id="PS50935">
    <property type="entry name" value="SSB"/>
    <property type="match status" value="1"/>
</dbReference>
<organism>
    <name type="scientific">Shewanella oneidensis (strain ATCC 700550 / JCM 31522 / CIP 106686 / LMG 19005 / NCIMB 14063 / MR-1)</name>
    <dbReference type="NCBI Taxonomy" id="211586"/>
    <lineage>
        <taxon>Bacteria</taxon>
        <taxon>Pseudomonadati</taxon>
        <taxon>Pseudomonadota</taxon>
        <taxon>Gammaproteobacteria</taxon>
        <taxon>Alteromonadales</taxon>
        <taxon>Shewanellaceae</taxon>
        <taxon>Shewanella</taxon>
    </lineage>
</organism>
<reference key="1">
    <citation type="journal article" date="2002" name="Nat. Biotechnol.">
        <title>Genome sequence of the dissimilatory metal ion-reducing bacterium Shewanella oneidensis.</title>
        <authorList>
            <person name="Heidelberg J.F."/>
            <person name="Paulsen I.T."/>
            <person name="Nelson K.E."/>
            <person name="Gaidos E.J."/>
            <person name="Nelson W.C."/>
            <person name="Read T.D."/>
            <person name="Eisen J.A."/>
            <person name="Seshadri R."/>
            <person name="Ward N.L."/>
            <person name="Methe B.A."/>
            <person name="Clayton R.A."/>
            <person name="Meyer T."/>
            <person name="Tsapin A."/>
            <person name="Scott J."/>
            <person name="Beanan M.J."/>
            <person name="Brinkac L.M."/>
            <person name="Daugherty S.C."/>
            <person name="DeBoy R.T."/>
            <person name="Dodson R.J."/>
            <person name="Durkin A.S."/>
            <person name="Haft D.H."/>
            <person name="Kolonay J.F."/>
            <person name="Madupu R."/>
            <person name="Peterson J.D."/>
            <person name="Umayam L.A."/>
            <person name="White O."/>
            <person name="Wolf A.M."/>
            <person name="Vamathevan J.J."/>
            <person name="Weidman J.F."/>
            <person name="Impraim M."/>
            <person name="Lee K."/>
            <person name="Berry K.J."/>
            <person name="Lee C."/>
            <person name="Mueller J."/>
            <person name="Khouri H.M."/>
            <person name="Gill J."/>
            <person name="Utterback T.R."/>
            <person name="McDonald L.A."/>
            <person name="Feldblyum T.V."/>
            <person name="Smith H.O."/>
            <person name="Venter J.C."/>
            <person name="Nealson K.H."/>
            <person name="Fraser C.M."/>
        </authorList>
    </citation>
    <scope>NUCLEOTIDE SEQUENCE [LARGE SCALE GENOMIC DNA]</scope>
    <source>
        <strain>ATCC 700550 / JCM 31522 / CIP 106686 / LMG 19005 / NCIMB 14063 / MR-1</strain>
    </source>
</reference>
<evidence type="ECO:0000255" key="1">
    <source>
        <dbReference type="HAMAP-Rule" id="MF_00984"/>
    </source>
</evidence>
<evidence type="ECO:0000256" key="2">
    <source>
        <dbReference type="SAM" id="MobiDB-lite"/>
    </source>
</evidence>
<feature type="chain" id="PRO_0000096096" description="Single-stranded DNA-binding protein">
    <location>
        <begin position="1"/>
        <end position="238"/>
    </location>
</feature>
<feature type="domain" description="SSB" evidence="1">
    <location>
        <begin position="6"/>
        <end position="110"/>
    </location>
</feature>
<feature type="DNA-binding region" evidence="1">
    <location>
        <begin position="54"/>
        <end position="60"/>
    </location>
</feature>
<feature type="region of interest" description="Disordered" evidence="2">
    <location>
        <begin position="103"/>
        <end position="238"/>
    </location>
</feature>
<feature type="short sequence motif" description="Important for interaction with partner proteins" evidence="1">
    <location>
        <begin position="233"/>
        <end position="238"/>
    </location>
</feature>
<feature type="compositionally biased region" description="Polar residues" evidence="2">
    <location>
        <begin position="105"/>
        <end position="115"/>
    </location>
</feature>
<feature type="compositionally biased region" description="Low complexity" evidence="2">
    <location>
        <begin position="125"/>
        <end position="160"/>
    </location>
</feature>
<feature type="compositionally biased region" description="Low complexity" evidence="2">
    <location>
        <begin position="170"/>
        <end position="222"/>
    </location>
</feature>
<feature type="compositionally biased region" description="Acidic residues" evidence="2">
    <location>
        <begin position="227"/>
        <end position="238"/>
    </location>
</feature>
<sequence>MASRGVNKVILVGNLGQDPEVRYMPNGNAVANITVATSESWKDQQGQQQERTEWHRVVLFGKLAEITGEYLRKGSQVYLEGKLQTRKWKDQSGQDRYSTEVVIDQSGSMQMLGSRNQGGQGAPMGGMPQNGGYQSAPQQAAPAQNQYAPAPQAAPAYQAPAPQPQSGYNQPPAQQSYGQQQAQPHVQPHAQPQQGGYAPKPAAPAYQAPAAPAQRPAPQPQQNFTPDLDDGWDDDIPF</sequence>
<accession>Q8EA81</accession>